<dbReference type="EC" id="2.4.2.18" evidence="2"/>
<dbReference type="EMBL" id="X04273">
    <property type="protein sequence ID" value="CAA27822.1"/>
    <property type="molecule type" value="Genomic_DNA"/>
</dbReference>
<dbReference type="EMBL" id="U28372">
    <property type="protein sequence ID" value="AAB64790.1"/>
    <property type="molecule type" value="Genomic_DNA"/>
</dbReference>
<dbReference type="EMBL" id="X73297">
    <property type="protein sequence ID" value="CAA51732.1"/>
    <property type="molecule type" value="Genomic_DNA"/>
</dbReference>
<dbReference type="EMBL" id="BK006938">
    <property type="protein sequence ID" value="DAA12194.1"/>
    <property type="molecule type" value="Genomic_DNA"/>
</dbReference>
<dbReference type="PIR" id="S05865">
    <property type="entry name" value="NPBY"/>
</dbReference>
<dbReference type="RefSeq" id="NP_010641.3">
    <property type="nucleotide sequence ID" value="NM_001180662.3"/>
</dbReference>
<dbReference type="PDB" id="7DSJ">
    <property type="method" value="X-ray"/>
    <property type="resolution" value="2.44 A"/>
    <property type="chains" value="A/B=1-380"/>
</dbReference>
<dbReference type="PDB" id="7DSM">
    <property type="method" value="X-ray"/>
    <property type="resolution" value="2.39 A"/>
    <property type="chains" value="A/B=1-380"/>
</dbReference>
<dbReference type="PDB" id="7DSO">
    <property type="method" value="X-ray"/>
    <property type="resolution" value="2.34 A"/>
    <property type="chains" value="A/B=1-380"/>
</dbReference>
<dbReference type="PDB" id="7DSP">
    <property type="method" value="X-ray"/>
    <property type="resolution" value="1.95 A"/>
    <property type="chains" value="A/B=1-380"/>
</dbReference>
<dbReference type="PDB" id="7DSR">
    <property type="method" value="X-ray"/>
    <property type="resolution" value="2.50 A"/>
    <property type="chains" value="A/B=1-380"/>
</dbReference>
<dbReference type="PDBsum" id="7DSJ"/>
<dbReference type="PDBsum" id="7DSM"/>
<dbReference type="PDBsum" id="7DSO"/>
<dbReference type="PDBsum" id="7DSP"/>
<dbReference type="PDBsum" id="7DSR"/>
<dbReference type="SMR" id="P07285"/>
<dbReference type="BioGRID" id="32411">
    <property type="interactions" value="173"/>
</dbReference>
<dbReference type="FunCoup" id="P07285">
    <property type="interactions" value="419"/>
</dbReference>
<dbReference type="IntAct" id="P07285">
    <property type="interactions" value="3"/>
</dbReference>
<dbReference type="MINT" id="P07285"/>
<dbReference type="STRING" id="4932.YDR354W"/>
<dbReference type="PaxDb" id="4932-YDR354W"/>
<dbReference type="PeptideAtlas" id="P07285"/>
<dbReference type="EnsemblFungi" id="YDR354W_mRNA">
    <property type="protein sequence ID" value="YDR354W"/>
    <property type="gene ID" value="YDR354W"/>
</dbReference>
<dbReference type="GeneID" id="851956"/>
<dbReference type="KEGG" id="sce:YDR354W"/>
<dbReference type="AGR" id="SGD:S000002762"/>
<dbReference type="SGD" id="S000002762">
    <property type="gene designation" value="TRP4"/>
</dbReference>
<dbReference type="VEuPathDB" id="FungiDB:YDR354W"/>
<dbReference type="eggNOG" id="KOG1438">
    <property type="taxonomic scope" value="Eukaryota"/>
</dbReference>
<dbReference type="HOGENOM" id="CLU_034315_2_1_1"/>
<dbReference type="InParanoid" id="P07285"/>
<dbReference type="OMA" id="GPMTNPA"/>
<dbReference type="OrthoDB" id="427800at2759"/>
<dbReference type="BioCyc" id="YEAST:YDR354W-MONOMER"/>
<dbReference type="SABIO-RK" id="P07285"/>
<dbReference type="UniPathway" id="UPA00035">
    <property type="reaction ID" value="UER00041"/>
</dbReference>
<dbReference type="BioGRID-ORCS" id="851956">
    <property type="hits" value="0 hits in 10 CRISPR screens"/>
</dbReference>
<dbReference type="PRO" id="PR:P07285"/>
<dbReference type="Proteomes" id="UP000002311">
    <property type="component" value="Chromosome IV"/>
</dbReference>
<dbReference type="RNAct" id="P07285">
    <property type="molecule type" value="protein"/>
</dbReference>
<dbReference type="GO" id="GO:0005737">
    <property type="term" value="C:cytoplasm"/>
    <property type="evidence" value="ECO:0007005"/>
    <property type="project" value="SGD"/>
</dbReference>
<dbReference type="GO" id="GO:0005829">
    <property type="term" value="C:cytosol"/>
    <property type="evidence" value="ECO:0000318"/>
    <property type="project" value="GO_Central"/>
</dbReference>
<dbReference type="GO" id="GO:0005634">
    <property type="term" value="C:nucleus"/>
    <property type="evidence" value="ECO:0007005"/>
    <property type="project" value="SGD"/>
</dbReference>
<dbReference type="GO" id="GO:0004048">
    <property type="term" value="F:anthranilate phosphoribosyltransferase activity"/>
    <property type="evidence" value="ECO:0000314"/>
    <property type="project" value="SGD"/>
</dbReference>
<dbReference type="GO" id="GO:0000162">
    <property type="term" value="P:L-tryptophan biosynthetic process"/>
    <property type="evidence" value="ECO:0000315"/>
    <property type="project" value="SGD"/>
</dbReference>
<dbReference type="FunFam" id="3.40.1030.10:FF:000002">
    <property type="entry name" value="Anthranilate phosphoribosyltransferase"/>
    <property type="match status" value="1"/>
</dbReference>
<dbReference type="Gene3D" id="3.40.1030.10">
    <property type="entry name" value="Nucleoside phosphorylase/phosphoribosyltransferase catalytic domain"/>
    <property type="match status" value="1"/>
</dbReference>
<dbReference type="InterPro" id="IPR005940">
    <property type="entry name" value="Anthranilate_Pribosyl_Tfrase"/>
</dbReference>
<dbReference type="InterPro" id="IPR000312">
    <property type="entry name" value="Glycosyl_Trfase_fam3"/>
</dbReference>
<dbReference type="InterPro" id="IPR035902">
    <property type="entry name" value="Nuc_phospho_transferase"/>
</dbReference>
<dbReference type="NCBIfam" id="TIGR01245">
    <property type="entry name" value="trpD"/>
    <property type="match status" value="1"/>
</dbReference>
<dbReference type="PANTHER" id="PTHR43285">
    <property type="entry name" value="ANTHRANILATE PHOSPHORIBOSYLTRANSFERASE"/>
    <property type="match status" value="1"/>
</dbReference>
<dbReference type="PANTHER" id="PTHR43285:SF2">
    <property type="entry name" value="ANTHRANILATE PHOSPHORIBOSYLTRANSFERASE"/>
    <property type="match status" value="1"/>
</dbReference>
<dbReference type="Pfam" id="PF00591">
    <property type="entry name" value="Glycos_transf_3"/>
    <property type="match status" value="1"/>
</dbReference>
<dbReference type="SUPFAM" id="SSF52418">
    <property type="entry name" value="Nucleoside phosphorylase/phosphoribosyltransferase catalytic domain"/>
    <property type="match status" value="1"/>
</dbReference>
<accession>P07285</accession>
<accession>D6VSY4</accession>
<comment type="function">
    <text evidence="6">Catalyzes the transfer of the phosphoribosyl group of 5-phosphorylribose-1-pyrophosphate (PRPP) to anthranilate to yield N-(5'-phosphoribosyl)-anthranilate (PRA), the second step in tryptophan biosynthesis.</text>
</comment>
<comment type="catalytic activity">
    <reaction evidence="2">
        <text>N-(5-phospho-beta-D-ribosyl)anthranilate + diphosphate = 5-phospho-alpha-D-ribose 1-diphosphate + anthranilate</text>
        <dbReference type="Rhea" id="RHEA:11768"/>
        <dbReference type="ChEBI" id="CHEBI:16567"/>
        <dbReference type="ChEBI" id="CHEBI:18277"/>
        <dbReference type="ChEBI" id="CHEBI:33019"/>
        <dbReference type="ChEBI" id="CHEBI:58017"/>
        <dbReference type="EC" id="2.4.2.18"/>
    </reaction>
    <physiologicalReaction direction="right-to-left" evidence="6">
        <dbReference type="Rhea" id="RHEA:11770"/>
    </physiologicalReaction>
</comment>
<comment type="cofactor">
    <cofactor evidence="3">
        <name>Mg(2+)</name>
        <dbReference type="ChEBI" id="CHEBI:18420"/>
    </cofactor>
</comment>
<comment type="pathway">
    <text evidence="6">Amino-acid biosynthesis; L-tryptophan biosynthesis; L-tryptophan from chorismate: step 2/5.</text>
</comment>
<comment type="subunit">
    <text evidence="3">Homodimer.</text>
</comment>
<comment type="miscellaneous">
    <text evidence="1">Present with 1760 molecules/cell in log phase SD medium.</text>
</comment>
<comment type="similarity">
    <text evidence="5">Belongs to the anthranilate phosphoribosyltransferase family.</text>
</comment>
<reference key="1">
    <citation type="journal article" date="1986" name="Nucleic Acids Res.">
        <title>The TRP4 gene of Saccharomyces cerevisiae: isolation and structural analysis.</title>
        <authorList>
            <person name="Furter R."/>
            <person name="Paravicini G."/>
            <person name="Aebi M."/>
            <person name="Braus G."/>
            <person name="Prantl F."/>
            <person name="Niederberger P."/>
            <person name="Huetter R."/>
        </authorList>
    </citation>
    <scope>NUCLEOTIDE SEQUENCE [GENOMIC DNA]</scope>
    <scope>FUNCTION</scope>
    <scope>CATALYTIC ACTIVITY</scope>
    <scope>PATHWAY</scope>
</reference>
<reference key="2">
    <citation type="journal article" date="1997" name="Nature">
        <title>The nucleotide sequence of Saccharomyces cerevisiae chromosome IV.</title>
        <authorList>
            <person name="Jacq C."/>
            <person name="Alt-Moerbe J."/>
            <person name="Andre B."/>
            <person name="Arnold W."/>
            <person name="Bahr A."/>
            <person name="Ballesta J.P.G."/>
            <person name="Bargues M."/>
            <person name="Baron L."/>
            <person name="Becker A."/>
            <person name="Biteau N."/>
            <person name="Bloecker H."/>
            <person name="Blugeon C."/>
            <person name="Boskovic J."/>
            <person name="Brandt P."/>
            <person name="Brueckner M."/>
            <person name="Buitrago M.J."/>
            <person name="Coster F."/>
            <person name="Delaveau T."/>
            <person name="del Rey F."/>
            <person name="Dujon B."/>
            <person name="Eide L.G."/>
            <person name="Garcia-Cantalejo J.M."/>
            <person name="Goffeau A."/>
            <person name="Gomez-Peris A."/>
            <person name="Granotier C."/>
            <person name="Hanemann V."/>
            <person name="Hankeln T."/>
            <person name="Hoheisel J.D."/>
            <person name="Jaeger W."/>
            <person name="Jimenez A."/>
            <person name="Jonniaux J.-L."/>
            <person name="Kraemer C."/>
            <person name="Kuester H."/>
            <person name="Laamanen P."/>
            <person name="Legros Y."/>
            <person name="Louis E.J."/>
            <person name="Moeller-Rieker S."/>
            <person name="Monnet A."/>
            <person name="Moro M."/>
            <person name="Mueller-Auer S."/>
            <person name="Nussbaumer B."/>
            <person name="Paricio N."/>
            <person name="Paulin L."/>
            <person name="Perea J."/>
            <person name="Perez-Alonso M."/>
            <person name="Perez-Ortin J.E."/>
            <person name="Pohl T.M."/>
            <person name="Prydz H."/>
            <person name="Purnelle B."/>
            <person name="Rasmussen S.W."/>
            <person name="Remacha M.A."/>
            <person name="Revuelta J.L."/>
            <person name="Rieger M."/>
            <person name="Salom D."/>
            <person name="Saluz H.P."/>
            <person name="Saiz J.E."/>
            <person name="Saren A.-M."/>
            <person name="Schaefer M."/>
            <person name="Scharfe M."/>
            <person name="Schmidt E.R."/>
            <person name="Schneider C."/>
            <person name="Scholler P."/>
            <person name="Schwarz S."/>
            <person name="Soler-Mira A."/>
            <person name="Urrestarazu L.A."/>
            <person name="Verhasselt P."/>
            <person name="Vissers S."/>
            <person name="Voet M."/>
            <person name="Volckaert G."/>
            <person name="Wagner G."/>
            <person name="Wambutt R."/>
            <person name="Wedler E."/>
            <person name="Wedler H."/>
            <person name="Woelfl S."/>
            <person name="Harris D.E."/>
            <person name="Bowman S."/>
            <person name="Brown D."/>
            <person name="Churcher C.M."/>
            <person name="Connor R."/>
            <person name="Dedman K."/>
            <person name="Gentles S."/>
            <person name="Hamlin N."/>
            <person name="Hunt S."/>
            <person name="Jones L."/>
            <person name="McDonald S."/>
            <person name="Murphy L.D."/>
            <person name="Niblett D."/>
            <person name="Odell C."/>
            <person name="Oliver K."/>
            <person name="Rajandream M.A."/>
            <person name="Richards C."/>
            <person name="Shore L."/>
            <person name="Walsh S.V."/>
            <person name="Barrell B.G."/>
            <person name="Dietrich F.S."/>
            <person name="Mulligan J.T."/>
            <person name="Allen E."/>
            <person name="Araujo R."/>
            <person name="Aviles E."/>
            <person name="Berno A."/>
            <person name="Carpenter J."/>
            <person name="Chen E."/>
            <person name="Cherry J.M."/>
            <person name="Chung E."/>
            <person name="Duncan M."/>
            <person name="Hunicke-Smith S."/>
            <person name="Hyman R.W."/>
            <person name="Komp C."/>
            <person name="Lashkari D."/>
            <person name="Lew H."/>
            <person name="Lin D."/>
            <person name="Mosedale D."/>
            <person name="Nakahara K."/>
            <person name="Namath A."/>
            <person name="Oefner P."/>
            <person name="Oh C."/>
            <person name="Petel F.X."/>
            <person name="Roberts D."/>
            <person name="Schramm S."/>
            <person name="Schroeder M."/>
            <person name="Shogren T."/>
            <person name="Shroff N."/>
            <person name="Winant A."/>
            <person name="Yelton M.A."/>
            <person name="Botstein D."/>
            <person name="Davis R.W."/>
            <person name="Johnston M."/>
            <person name="Andrews S."/>
            <person name="Brinkman R."/>
            <person name="Cooper J."/>
            <person name="Ding H."/>
            <person name="Du Z."/>
            <person name="Favello A."/>
            <person name="Fulton L."/>
            <person name="Gattung S."/>
            <person name="Greco T."/>
            <person name="Hallsworth K."/>
            <person name="Hawkins J."/>
            <person name="Hillier L.W."/>
            <person name="Jier M."/>
            <person name="Johnson D."/>
            <person name="Johnston L."/>
            <person name="Kirsten J."/>
            <person name="Kucaba T."/>
            <person name="Langston Y."/>
            <person name="Latreille P."/>
            <person name="Le T."/>
            <person name="Mardis E."/>
            <person name="Menezes S."/>
            <person name="Miller N."/>
            <person name="Nhan M."/>
            <person name="Pauley A."/>
            <person name="Peluso D."/>
            <person name="Rifkin L."/>
            <person name="Riles L."/>
            <person name="Taich A."/>
            <person name="Trevaskis E."/>
            <person name="Vignati D."/>
            <person name="Wilcox L."/>
            <person name="Wohldman P."/>
            <person name="Vaudin M."/>
            <person name="Wilson R."/>
            <person name="Waterston R."/>
            <person name="Albermann K."/>
            <person name="Hani J."/>
            <person name="Heumann K."/>
            <person name="Kleine K."/>
            <person name="Mewes H.-W."/>
            <person name="Zollner A."/>
            <person name="Zaccaria P."/>
        </authorList>
    </citation>
    <scope>NUCLEOTIDE SEQUENCE [LARGE SCALE GENOMIC DNA]</scope>
    <source>
        <strain>ATCC 204508 / S288c</strain>
    </source>
</reference>
<reference key="3">
    <citation type="journal article" date="2014" name="G3 (Bethesda)">
        <title>The reference genome sequence of Saccharomyces cerevisiae: Then and now.</title>
        <authorList>
            <person name="Engel S.R."/>
            <person name="Dietrich F.S."/>
            <person name="Fisk D.G."/>
            <person name="Binkley G."/>
            <person name="Balakrishnan R."/>
            <person name="Costanzo M.C."/>
            <person name="Dwight S.S."/>
            <person name="Hitz B.C."/>
            <person name="Karra K."/>
            <person name="Nash R.S."/>
            <person name="Weng S."/>
            <person name="Wong E.D."/>
            <person name="Lloyd P."/>
            <person name="Skrzypek M.S."/>
            <person name="Miyasato S.R."/>
            <person name="Simison M."/>
            <person name="Cherry J.M."/>
        </authorList>
    </citation>
    <scope>GENOME REANNOTATION</scope>
    <source>
        <strain>ATCC 204508 / S288c</strain>
    </source>
</reference>
<reference key="4">
    <citation type="journal article" date="1993" name="J. Cell Biol.">
        <title>A spacer protein in the Saccharomyces cerevisiae spindle poly body whose transcript is cell cycle-regulated.</title>
        <authorList>
            <person name="Kilmartin J.V."/>
            <person name="Dyos S.L."/>
            <person name="Kershaw D."/>
            <person name="Finch J.T."/>
        </authorList>
    </citation>
    <scope>NUCLEOTIDE SEQUENCE [GENOMIC DNA] OF 202-380</scope>
</reference>
<reference key="5">
    <citation type="journal article" date="2003" name="Nature">
        <title>Global analysis of protein expression in yeast.</title>
        <authorList>
            <person name="Ghaemmaghami S."/>
            <person name="Huh W.-K."/>
            <person name="Bower K."/>
            <person name="Howson R.W."/>
            <person name="Belle A."/>
            <person name="Dephoure N."/>
            <person name="O'Shea E.K."/>
            <person name="Weissman J.S."/>
        </authorList>
    </citation>
    <scope>LEVEL OF PROTEIN EXPRESSION [LARGE SCALE ANALYSIS]</scope>
</reference>
<reference evidence="7 8 9 10 11" key="6">
    <citation type="journal article" date="2021" name="Acta Crystallogr. F Struct. Biol. Commun.">
        <title>Crystal structures of anthranilate phosphoribosyltransferase from Saccharomyces cerevisiae.</title>
        <authorList>
            <person name="Wu X."/>
            <person name="Zhang M."/>
            <person name="Kuang Z."/>
            <person name="Yue J."/>
            <person name="Xue L."/>
            <person name="Zhu M."/>
            <person name="Zhu Z."/>
            <person name="Khan M.H."/>
            <person name="Niu L."/>
        </authorList>
    </citation>
    <scope>X-RAY CRYSTALLOGRAPHY (1.95 ANGSTROMS) IN COMPLEX WITH 5-PHOSPHORYLRIBOSE-1-PYROPHOSPHATE AND MAGNESIUM</scope>
    <scope>SUBUNIT</scope>
    <scope>COFACTOR</scope>
</reference>
<organism>
    <name type="scientific">Saccharomyces cerevisiae (strain ATCC 204508 / S288c)</name>
    <name type="common">Baker's yeast</name>
    <dbReference type="NCBI Taxonomy" id="559292"/>
    <lineage>
        <taxon>Eukaryota</taxon>
        <taxon>Fungi</taxon>
        <taxon>Dikarya</taxon>
        <taxon>Ascomycota</taxon>
        <taxon>Saccharomycotina</taxon>
        <taxon>Saccharomycetes</taxon>
        <taxon>Saccharomycetales</taxon>
        <taxon>Saccharomycetaceae</taxon>
        <taxon>Saccharomyces</taxon>
    </lineage>
</organism>
<evidence type="ECO:0000269" key="1">
    <source>
    </source>
</evidence>
<evidence type="ECO:0000269" key="2">
    <source>
    </source>
</evidence>
<evidence type="ECO:0000269" key="3">
    <source>
    </source>
</evidence>
<evidence type="ECO:0000303" key="4">
    <source>
    </source>
</evidence>
<evidence type="ECO:0000305" key="5"/>
<evidence type="ECO:0000305" key="6">
    <source>
    </source>
</evidence>
<evidence type="ECO:0007744" key="7">
    <source>
        <dbReference type="PDB" id="7DSJ"/>
    </source>
</evidence>
<evidence type="ECO:0007744" key="8">
    <source>
        <dbReference type="PDB" id="7DSM"/>
    </source>
</evidence>
<evidence type="ECO:0007744" key="9">
    <source>
        <dbReference type="PDB" id="7DSO"/>
    </source>
</evidence>
<evidence type="ECO:0007744" key="10">
    <source>
        <dbReference type="PDB" id="7DSP"/>
    </source>
</evidence>
<evidence type="ECO:0007744" key="11">
    <source>
        <dbReference type="PDB" id="7DSR"/>
    </source>
</evidence>
<evidence type="ECO:0007829" key="12">
    <source>
        <dbReference type="PDB" id="7DSJ"/>
    </source>
</evidence>
<evidence type="ECO:0007829" key="13">
    <source>
        <dbReference type="PDB" id="7DSP"/>
    </source>
</evidence>
<sequence>MSEATLLSYTKKLLASPPQLSSTDLHDALLVILSLLQKCDTNSDESLSIYTKVSSFLTALRVTKLDHKAEYIAEAAKAVLRHSDLVDLPLPKKDELHPEDGPVILDIVGTGGDGQNTFNVSTSAAIVASGIQGLKICKHGGKASTSNSGAGDLIGTLGCDMFKVNSSTVPKLWPDNTFMFLLAPFFHHGMGHVSKIRKFLGIPTVFNVLGPLLHPVSHVNKRILGVYSKELAPEYAKAAALVYPGSETFIVWGHVGLDEVSPIGKTTVWHIDPTSSELKLKTFQLEPSMFGLEEHELSKCASYGPKENARILKEEVLSGKYHLGDNNPIYDYILMNTAVLYCLSQGHQNWKEGIIKAEESIHSGNALRSLEHFIDSVSSL</sequence>
<gene>
    <name evidence="4" type="primary">TRP4</name>
    <name type="ordered locus">YDR354W</name>
    <name type="ORF">D9476.4</name>
</gene>
<keyword id="KW-0002">3D-structure</keyword>
<keyword id="KW-0028">Amino-acid biosynthesis</keyword>
<keyword id="KW-0057">Aromatic amino acid biosynthesis</keyword>
<keyword id="KW-0328">Glycosyltransferase</keyword>
<keyword id="KW-1185">Reference proteome</keyword>
<keyword id="KW-0808">Transferase</keyword>
<keyword id="KW-0822">Tryptophan biosynthesis</keyword>
<proteinExistence type="evidence at protein level"/>
<feature type="chain" id="PRO_0000154528" description="Anthranilate phosphoribosyltransferase">
    <location>
        <begin position="1"/>
        <end position="380"/>
    </location>
</feature>
<feature type="binding site" evidence="3 7">
    <location>
        <position position="109"/>
    </location>
    <ligand>
        <name>5-phospho-alpha-D-ribose 1-diphosphate</name>
        <dbReference type="ChEBI" id="CHEBI:58017"/>
    </ligand>
</feature>
<feature type="binding site" evidence="3 7">
    <location>
        <position position="119"/>
    </location>
    <ligand>
        <name>5-phospho-alpha-D-ribose 1-diphosphate</name>
        <dbReference type="ChEBI" id="CHEBI:58017"/>
    </ligand>
</feature>
<feature type="binding site" evidence="3 7">
    <location>
        <position position="121"/>
    </location>
    <ligand>
        <name>5-phospho-alpha-D-ribose 1-diphosphate</name>
        <dbReference type="ChEBI" id="CHEBI:58017"/>
    </ligand>
</feature>
<feature type="binding site" evidence="3 7">
    <location>
        <position position="122"/>
    </location>
    <ligand>
        <name>5-phospho-alpha-D-ribose 1-diphosphate</name>
        <dbReference type="ChEBI" id="CHEBI:58017"/>
    </ligand>
</feature>
<feature type="binding site" evidence="3 7">
    <location>
        <position position="142"/>
    </location>
    <ligand>
        <name>5-phospho-alpha-D-ribose 1-diphosphate</name>
        <dbReference type="ChEBI" id="CHEBI:58017"/>
    </ligand>
</feature>
<feature type="binding site" evidence="3 7">
    <location>
        <position position="144"/>
    </location>
    <ligand>
        <name>5-phospho-alpha-D-ribose 1-diphosphate</name>
        <dbReference type="ChEBI" id="CHEBI:58017"/>
    </ligand>
</feature>
<feature type="binding site" evidence="3 7">
    <location>
        <position position="146"/>
    </location>
    <ligand>
        <name>5-phospho-alpha-D-ribose 1-diphosphate</name>
        <dbReference type="ChEBI" id="CHEBI:58017"/>
    </ligand>
</feature>
<feature type="binding site" evidence="3 7 10">
    <location>
        <position position="258"/>
    </location>
    <ligand>
        <name>Mg(2+)</name>
        <dbReference type="ChEBI" id="CHEBI:18420"/>
    </ligand>
</feature>
<feature type="binding site" evidence="3 7 10">
    <location>
        <position position="259"/>
    </location>
    <ligand>
        <name>Mg(2+)</name>
        <dbReference type="ChEBI" id="CHEBI:18420"/>
    </ligand>
</feature>
<feature type="helix" evidence="13">
    <location>
        <begin position="3"/>
        <end position="14"/>
    </location>
</feature>
<feature type="strand" evidence="13">
    <location>
        <begin position="15"/>
        <end position="17"/>
    </location>
</feature>
<feature type="helix" evidence="13">
    <location>
        <begin position="22"/>
        <end position="37"/>
    </location>
</feature>
<feature type="strand" evidence="12">
    <location>
        <begin position="41"/>
        <end position="43"/>
    </location>
</feature>
<feature type="helix" evidence="13">
    <location>
        <begin position="44"/>
        <end position="63"/>
    </location>
</feature>
<feature type="helix" evidence="13">
    <location>
        <begin position="65"/>
        <end position="67"/>
    </location>
</feature>
<feature type="helix" evidence="13">
    <location>
        <begin position="69"/>
        <end position="80"/>
    </location>
</feature>
<feature type="strand" evidence="13">
    <location>
        <begin position="104"/>
        <end position="109"/>
    </location>
</feature>
<feature type="helix" evidence="13">
    <location>
        <begin position="120"/>
        <end position="129"/>
    </location>
</feature>
<feature type="strand" evidence="13">
    <location>
        <begin position="135"/>
        <end position="140"/>
    </location>
</feature>
<feature type="strand" evidence="12">
    <location>
        <begin position="144"/>
        <end position="148"/>
    </location>
</feature>
<feature type="helix" evidence="13">
    <location>
        <begin position="153"/>
        <end position="157"/>
    </location>
</feature>
<feature type="helix" evidence="13">
    <location>
        <begin position="161"/>
        <end position="163"/>
    </location>
</feature>
<feature type="turn" evidence="13">
    <location>
        <begin position="166"/>
        <end position="168"/>
    </location>
</feature>
<feature type="helix" evidence="13">
    <location>
        <begin position="169"/>
        <end position="172"/>
    </location>
</feature>
<feature type="helix" evidence="13">
    <location>
        <begin position="173"/>
        <end position="175"/>
    </location>
</feature>
<feature type="strand" evidence="13">
    <location>
        <begin position="177"/>
        <end position="182"/>
    </location>
</feature>
<feature type="helix" evidence="13">
    <location>
        <begin position="183"/>
        <end position="185"/>
    </location>
</feature>
<feature type="helix" evidence="13">
    <location>
        <begin position="188"/>
        <end position="200"/>
    </location>
</feature>
<feature type="helix" evidence="13">
    <location>
        <begin position="205"/>
        <end position="208"/>
    </location>
</feature>
<feature type="helix" evidence="13">
    <location>
        <begin position="210"/>
        <end position="212"/>
    </location>
</feature>
<feature type="strand" evidence="13">
    <location>
        <begin position="221"/>
        <end position="225"/>
    </location>
</feature>
<feature type="helix" evidence="13">
    <location>
        <begin position="231"/>
        <end position="242"/>
    </location>
</feature>
<feature type="strand" evidence="13">
    <location>
        <begin position="247"/>
        <end position="253"/>
    </location>
</feature>
<feature type="turn" evidence="13">
    <location>
        <begin position="254"/>
        <end position="256"/>
    </location>
</feature>
<feature type="strand" evidence="13">
    <location>
        <begin position="257"/>
        <end position="259"/>
    </location>
</feature>
<feature type="strand" evidence="13">
    <location>
        <begin position="262"/>
        <end position="264"/>
    </location>
</feature>
<feature type="strand" evidence="13">
    <location>
        <begin position="266"/>
        <end position="271"/>
    </location>
</feature>
<feature type="strand" evidence="13">
    <location>
        <begin position="281"/>
        <end position="285"/>
    </location>
</feature>
<feature type="helix" evidence="13">
    <location>
        <begin position="287"/>
        <end position="290"/>
    </location>
</feature>
<feature type="helix" evidence="13">
    <location>
        <begin position="297"/>
        <end position="299"/>
    </location>
</feature>
<feature type="helix" evidence="13">
    <location>
        <begin position="305"/>
        <end position="314"/>
    </location>
</feature>
<feature type="turn" evidence="13">
    <location>
        <begin position="315"/>
        <end position="318"/>
    </location>
</feature>
<feature type="helix" evidence="13">
    <location>
        <begin position="328"/>
        <end position="345"/>
    </location>
</feature>
<feature type="helix" evidence="13">
    <location>
        <begin position="350"/>
        <end position="362"/>
    </location>
</feature>
<feature type="helix" evidence="13">
    <location>
        <begin position="365"/>
        <end position="378"/>
    </location>
</feature>
<protein>
    <recommendedName>
        <fullName evidence="4">Anthranilate phosphoribosyltransferase</fullName>
        <shortName evidence="4">PRtransferase</shortName>
        <ecNumber evidence="2">2.4.2.18</ecNumber>
    </recommendedName>
</protein>
<name>TRPD_YEAST</name>